<feature type="chain" id="PRO_0000146878" description="Adenosylcobinamide-GDP ribazoletransferase">
    <location>
        <begin position="1"/>
        <end position="247"/>
    </location>
</feature>
<feature type="transmembrane region" description="Helical" evidence="1">
    <location>
        <begin position="34"/>
        <end position="54"/>
    </location>
</feature>
<feature type="transmembrane region" description="Helical" evidence="1">
    <location>
        <begin position="59"/>
        <end position="79"/>
    </location>
</feature>
<feature type="transmembrane region" description="Helical" evidence="1">
    <location>
        <begin position="113"/>
        <end position="133"/>
    </location>
</feature>
<feature type="transmembrane region" description="Helical" evidence="1">
    <location>
        <begin position="138"/>
        <end position="158"/>
    </location>
</feature>
<feature type="transmembrane region" description="Helical" evidence="1">
    <location>
        <begin position="194"/>
        <end position="214"/>
    </location>
</feature>
<keyword id="KW-0997">Cell inner membrane</keyword>
<keyword id="KW-1003">Cell membrane</keyword>
<keyword id="KW-0169">Cobalamin biosynthesis</keyword>
<keyword id="KW-0460">Magnesium</keyword>
<keyword id="KW-0472">Membrane</keyword>
<keyword id="KW-1185">Reference proteome</keyword>
<keyword id="KW-0808">Transferase</keyword>
<keyword id="KW-0812">Transmembrane</keyword>
<keyword id="KW-1133">Transmembrane helix</keyword>
<dbReference type="EC" id="2.7.8.26" evidence="1"/>
<dbReference type="EMBL" id="AE005174">
    <property type="protein sequence ID" value="AAG57053.1"/>
    <property type="molecule type" value="Genomic_DNA"/>
</dbReference>
<dbReference type="EMBL" id="BA000007">
    <property type="protein sequence ID" value="BAB36210.1"/>
    <property type="molecule type" value="Genomic_DNA"/>
</dbReference>
<dbReference type="PIR" id="A85824">
    <property type="entry name" value="A85824"/>
</dbReference>
<dbReference type="PIR" id="C90977">
    <property type="entry name" value="C90977"/>
</dbReference>
<dbReference type="RefSeq" id="NP_310814.1">
    <property type="nucleotide sequence ID" value="NC_002695.1"/>
</dbReference>
<dbReference type="RefSeq" id="WP_001295633.1">
    <property type="nucleotide sequence ID" value="NZ_VOAI01000052.1"/>
</dbReference>
<dbReference type="STRING" id="155864.Z3152"/>
<dbReference type="GeneID" id="913691"/>
<dbReference type="KEGG" id="ece:Z3152"/>
<dbReference type="KEGG" id="ecs:ECs_2787"/>
<dbReference type="PATRIC" id="fig|386585.9.peg.2920"/>
<dbReference type="eggNOG" id="COG0368">
    <property type="taxonomic scope" value="Bacteria"/>
</dbReference>
<dbReference type="HOGENOM" id="CLU_057426_1_1_6"/>
<dbReference type="OMA" id="GHTGDTY"/>
<dbReference type="UniPathway" id="UPA00148">
    <property type="reaction ID" value="UER00238"/>
</dbReference>
<dbReference type="Proteomes" id="UP000000558">
    <property type="component" value="Chromosome"/>
</dbReference>
<dbReference type="Proteomes" id="UP000002519">
    <property type="component" value="Chromosome"/>
</dbReference>
<dbReference type="GO" id="GO:0005886">
    <property type="term" value="C:plasma membrane"/>
    <property type="evidence" value="ECO:0007669"/>
    <property type="project" value="UniProtKB-SubCell"/>
</dbReference>
<dbReference type="GO" id="GO:0051073">
    <property type="term" value="F:adenosylcobinamide-GDP ribazoletransferase activity"/>
    <property type="evidence" value="ECO:0007669"/>
    <property type="project" value="UniProtKB-UniRule"/>
</dbReference>
<dbReference type="GO" id="GO:0008818">
    <property type="term" value="F:cobalamin 5'-phosphate synthase activity"/>
    <property type="evidence" value="ECO:0007669"/>
    <property type="project" value="UniProtKB-UniRule"/>
</dbReference>
<dbReference type="GO" id="GO:0009236">
    <property type="term" value="P:cobalamin biosynthetic process"/>
    <property type="evidence" value="ECO:0007669"/>
    <property type="project" value="UniProtKB-UniRule"/>
</dbReference>
<dbReference type="HAMAP" id="MF_00719">
    <property type="entry name" value="CobS"/>
    <property type="match status" value="1"/>
</dbReference>
<dbReference type="InterPro" id="IPR003805">
    <property type="entry name" value="CobS"/>
</dbReference>
<dbReference type="NCBIfam" id="TIGR00317">
    <property type="entry name" value="cobS"/>
    <property type="match status" value="1"/>
</dbReference>
<dbReference type="PANTHER" id="PTHR34148">
    <property type="entry name" value="ADENOSYLCOBINAMIDE-GDP RIBAZOLETRANSFERASE"/>
    <property type="match status" value="1"/>
</dbReference>
<dbReference type="PANTHER" id="PTHR34148:SF1">
    <property type="entry name" value="ADENOSYLCOBINAMIDE-GDP RIBAZOLETRANSFERASE"/>
    <property type="match status" value="1"/>
</dbReference>
<dbReference type="Pfam" id="PF02654">
    <property type="entry name" value="CobS"/>
    <property type="match status" value="1"/>
</dbReference>
<organism>
    <name type="scientific">Escherichia coli O157:H7</name>
    <dbReference type="NCBI Taxonomy" id="83334"/>
    <lineage>
        <taxon>Bacteria</taxon>
        <taxon>Pseudomonadati</taxon>
        <taxon>Pseudomonadota</taxon>
        <taxon>Gammaproteobacteria</taxon>
        <taxon>Enterobacterales</taxon>
        <taxon>Enterobacteriaceae</taxon>
        <taxon>Escherichia</taxon>
    </lineage>
</organism>
<reference key="1">
    <citation type="journal article" date="2001" name="Nature">
        <title>Genome sequence of enterohaemorrhagic Escherichia coli O157:H7.</title>
        <authorList>
            <person name="Perna N.T."/>
            <person name="Plunkett G. III"/>
            <person name="Burland V."/>
            <person name="Mau B."/>
            <person name="Glasner J.D."/>
            <person name="Rose D.J."/>
            <person name="Mayhew G.F."/>
            <person name="Evans P.S."/>
            <person name="Gregor J."/>
            <person name="Kirkpatrick H.A."/>
            <person name="Posfai G."/>
            <person name="Hackett J."/>
            <person name="Klink S."/>
            <person name="Boutin A."/>
            <person name="Shao Y."/>
            <person name="Miller L."/>
            <person name="Grotbeck E.J."/>
            <person name="Davis N.W."/>
            <person name="Lim A."/>
            <person name="Dimalanta E.T."/>
            <person name="Potamousis K."/>
            <person name="Apodaca J."/>
            <person name="Anantharaman T.S."/>
            <person name="Lin J."/>
            <person name="Yen G."/>
            <person name="Schwartz D.C."/>
            <person name="Welch R.A."/>
            <person name="Blattner F.R."/>
        </authorList>
    </citation>
    <scope>NUCLEOTIDE SEQUENCE [LARGE SCALE GENOMIC DNA]</scope>
    <source>
        <strain>O157:H7 / EDL933 / ATCC 700927 / EHEC</strain>
    </source>
</reference>
<reference key="2">
    <citation type="journal article" date="2001" name="DNA Res.">
        <title>Complete genome sequence of enterohemorrhagic Escherichia coli O157:H7 and genomic comparison with a laboratory strain K-12.</title>
        <authorList>
            <person name="Hayashi T."/>
            <person name="Makino K."/>
            <person name="Ohnishi M."/>
            <person name="Kurokawa K."/>
            <person name="Ishii K."/>
            <person name="Yokoyama K."/>
            <person name="Han C.-G."/>
            <person name="Ohtsubo E."/>
            <person name="Nakayama K."/>
            <person name="Murata T."/>
            <person name="Tanaka M."/>
            <person name="Tobe T."/>
            <person name="Iida T."/>
            <person name="Takami H."/>
            <person name="Honda T."/>
            <person name="Sasakawa C."/>
            <person name="Ogasawara N."/>
            <person name="Yasunaga T."/>
            <person name="Kuhara S."/>
            <person name="Shiba T."/>
            <person name="Hattori M."/>
            <person name="Shinagawa H."/>
        </authorList>
    </citation>
    <scope>NUCLEOTIDE SEQUENCE [LARGE SCALE GENOMIC DNA]</scope>
    <source>
        <strain>O157:H7 / Sakai / RIMD 0509952 / EHEC</strain>
    </source>
</reference>
<sequence>MSKLFWAMLSFITRLPVPRRWSQGLDFEHYSRGIITFPLIGLLLGAISGLVFMVLQAWCGAPLAALFSVLVLVLMTGGFHLDGLADTCDGVFSARSRDRMLEIMRDSRLGTHGGLALIFVVLAKILVLSELALRGEPILASLAAACAVSRGTAALLMYRHRYAREEGLGNVFIGKIDGRQTCVTLGLAAIFAAVLLPGMHGVAAMVVTMVAIFILGQLLKRTLGGQTGDTLGAAIELGELVFLLALL</sequence>
<name>COBS_ECO57</name>
<comment type="function">
    <text evidence="1">Joins adenosylcobinamide-GDP and alpha-ribazole to generate adenosylcobalamin (Ado-cobalamin). Also synthesizes adenosylcobalamin 5'-phosphate from adenosylcobinamide-GDP and alpha-ribazole 5'-phosphate.</text>
</comment>
<comment type="catalytic activity">
    <reaction evidence="1">
        <text>alpha-ribazole + adenosylcob(III)inamide-GDP = adenosylcob(III)alamin + GMP + H(+)</text>
        <dbReference type="Rhea" id="RHEA:16049"/>
        <dbReference type="ChEBI" id="CHEBI:10329"/>
        <dbReference type="ChEBI" id="CHEBI:15378"/>
        <dbReference type="ChEBI" id="CHEBI:18408"/>
        <dbReference type="ChEBI" id="CHEBI:58115"/>
        <dbReference type="ChEBI" id="CHEBI:60487"/>
        <dbReference type="EC" id="2.7.8.26"/>
    </reaction>
</comment>
<comment type="catalytic activity">
    <reaction evidence="1">
        <text>alpha-ribazole 5'-phosphate + adenosylcob(III)inamide-GDP = adenosylcob(III)alamin 5'-phosphate + GMP + H(+)</text>
        <dbReference type="Rhea" id="RHEA:23560"/>
        <dbReference type="ChEBI" id="CHEBI:15378"/>
        <dbReference type="ChEBI" id="CHEBI:57918"/>
        <dbReference type="ChEBI" id="CHEBI:58115"/>
        <dbReference type="ChEBI" id="CHEBI:60487"/>
        <dbReference type="ChEBI" id="CHEBI:60493"/>
        <dbReference type="EC" id="2.7.8.26"/>
    </reaction>
</comment>
<comment type="cofactor">
    <cofactor evidence="1">
        <name>Mg(2+)</name>
        <dbReference type="ChEBI" id="CHEBI:18420"/>
    </cofactor>
</comment>
<comment type="pathway">
    <text evidence="1">Cofactor biosynthesis; adenosylcobalamin biosynthesis; adenosylcobalamin from cob(II)yrinate a,c-diamide: step 7/7.</text>
</comment>
<comment type="subcellular location">
    <subcellularLocation>
        <location evidence="1">Cell inner membrane</location>
        <topology evidence="1">Multi-pass membrane protein</topology>
    </subcellularLocation>
</comment>
<comment type="similarity">
    <text evidence="1">Belongs to the CobS family.</text>
</comment>
<evidence type="ECO:0000255" key="1">
    <source>
        <dbReference type="HAMAP-Rule" id="MF_00719"/>
    </source>
</evidence>
<accession>Q8X8U9</accession>
<proteinExistence type="inferred from homology"/>
<gene>
    <name evidence="1" type="primary">cobS</name>
    <name type="ordered locus">Z3152</name>
    <name type="ordered locus">ECs2787</name>
</gene>
<protein>
    <recommendedName>
        <fullName evidence="1">Adenosylcobinamide-GDP ribazoletransferase</fullName>
        <ecNumber evidence="1">2.7.8.26</ecNumber>
    </recommendedName>
    <alternativeName>
        <fullName evidence="1">Cobalamin synthase</fullName>
    </alternativeName>
    <alternativeName>
        <fullName evidence="1">Cobalamin-5'-phosphate synthase</fullName>
    </alternativeName>
</protein>